<sequence>MTSALEKNRPSAAFAFDNSYAGLPQRFFAAQMPTQVAEPWLIKLNEPLAAELGLDVEALRRDGAAIFSGNLVPEGAQPLAMAYAGHQFGGFSPQLGDGRAILLGEVIDRSGRRFDIQLKGAGPTPFSRRGDGRAAIGPVLREYIISEAMFALGIPATRALAAVTTGEPVYREEVLPGAVFTRVATSHIRVGTFQYFAARGDTDGVRALTNYVIDRHYPALKEADNPYLALFEAVSERQAALIARWLHVGFIHGVMNTDNMTVSGETIDFGPCAFMDAYDPATVFSSIDQHGRYAYANQPGIGQWNLARLGETLLPLIDDEPDAAVDKANAVIRAYGERFQTHWLAGMREKIGLAREEDGDLELVQTLLSLMQAQGADFTLTFRRLSDLAGDEAAEPDFAASFREAEASRNWLSRWRERLSRDPQTAGARAAAMRKVNPAFIPRNHRVEQAIEAAVENGDFSLFEALLTVLARPYDDQPDFAPYREPPKPHERVLATFCGT</sequence>
<dbReference type="EC" id="2.7.7.-" evidence="1"/>
<dbReference type="EC" id="2.7.7.108" evidence="1"/>
<dbReference type="EMBL" id="CP001074">
    <property type="protein sequence ID" value="ACE90291.1"/>
    <property type="molecule type" value="Genomic_DNA"/>
</dbReference>
<dbReference type="SMR" id="B3PTN1"/>
<dbReference type="KEGG" id="rec:RHECIAT_CH0001310"/>
<dbReference type="eggNOG" id="COG0397">
    <property type="taxonomic scope" value="Bacteria"/>
</dbReference>
<dbReference type="HOGENOM" id="CLU_010245_4_1_5"/>
<dbReference type="Proteomes" id="UP000008817">
    <property type="component" value="Chromosome"/>
</dbReference>
<dbReference type="GO" id="GO:0070733">
    <property type="term" value="F:AMPylase activity"/>
    <property type="evidence" value="ECO:0007669"/>
    <property type="project" value="RHEA"/>
</dbReference>
<dbReference type="GO" id="GO:0005524">
    <property type="term" value="F:ATP binding"/>
    <property type="evidence" value="ECO:0007669"/>
    <property type="project" value="UniProtKB-UniRule"/>
</dbReference>
<dbReference type="GO" id="GO:0000287">
    <property type="term" value="F:magnesium ion binding"/>
    <property type="evidence" value="ECO:0007669"/>
    <property type="project" value="UniProtKB-UniRule"/>
</dbReference>
<dbReference type="HAMAP" id="MF_00692">
    <property type="entry name" value="YdiU_SelO"/>
    <property type="match status" value="1"/>
</dbReference>
<dbReference type="InterPro" id="IPR011009">
    <property type="entry name" value="Kinase-like_dom_sf"/>
</dbReference>
<dbReference type="InterPro" id="IPR003846">
    <property type="entry name" value="SelO"/>
</dbReference>
<dbReference type="NCBIfam" id="NF000658">
    <property type="entry name" value="PRK00029.1"/>
    <property type="match status" value="1"/>
</dbReference>
<dbReference type="PANTHER" id="PTHR32057">
    <property type="entry name" value="PROTEIN ADENYLYLTRANSFERASE SELO, MITOCHONDRIAL"/>
    <property type="match status" value="1"/>
</dbReference>
<dbReference type="PANTHER" id="PTHR32057:SF14">
    <property type="entry name" value="PROTEIN ADENYLYLTRANSFERASE SELO, MITOCHONDRIAL"/>
    <property type="match status" value="1"/>
</dbReference>
<dbReference type="Pfam" id="PF02696">
    <property type="entry name" value="SelO"/>
    <property type="match status" value="1"/>
</dbReference>
<dbReference type="SUPFAM" id="SSF56112">
    <property type="entry name" value="Protein kinase-like (PK-like)"/>
    <property type="match status" value="1"/>
</dbReference>
<accession>B3PTN1</accession>
<keyword id="KW-0067">ATP-binding</keyword>
<keyword id="KW-0460">Magnesium</keyword>
<keyword id="KW-0464">Manganese</keyword>
<keyword id="KW-0479">Metal-binding</keyword>
<keyword id="KW-0547">Nucleotide-binding</keyword>
<keyword id="KW-0548">Nucleotidyltransferase</keyword>
<keyword id="KW-0808">Transferase</keyword>
<protein>
    <recommendedName>
        <fullName evidence="1">Protein nucleotidyltransferase YdiU</fullName>
        <ecNumber evidence="1">2.7.7.-</ecNumber>
    </recommendedName>
    <alternativeName>
        <fullName evidence="1">Protein adenylyltransferase YdiU</fullName>
        <ecNumber evidence="1">2.7.7.108</ecNumber>
    </alternativeName>
    <alternativeName>
        <fullName evidence="1">Protein uridylyltransferase YdiU</fullName>
        <ecNumber evidence="1">2.7.7.-</ecNumber>
    </alternativeName>
</protein>
<reference key="1">
    <citation type="journal article" date="2010" name="Appl. Environ. Microbiol.">
        <title>Conserved symbiotic plasmid DNA sequences in the multireplicon pangenomic structure of Rhizobium etli.</title>
        <authorList>
            <person name="Gonzalez V."/>
            <person name="Acosta J.L."/>
            <person name="Santamaria R.I."/>
            <person name="Bustos P."/>
            <person name="Fernandez J.L."/>
            <person name="Hernandez Gonzalez I.L."/>
            <person name="Diaz R."/>
            <person name="Flores M."/>
            <person name="Palacios R."/>
            <person name="Mora J."/>
            <person name="Davila G."/>
        </authorList>
    </citation>
    <scope>NUCLEOTIDE SEQUENCE [LARGE SCALE GENOMIC DNA]</scope>
    <source>
        <strain>CIAT 652</strain>
    </source>
</reference>
<name>SELO_RHIE6</name>
<organism>
    <name type="scientific">Rhizobium etli (strain CIAT 652)</name>
    <dbReference type="NCBI Taxonomy" id="491916"/>
    <lineage>
        <taxon>Bacteria</taxon>
        <taxon>Pseudomonadati</taxon>
        <taxon>Pseudomonadota</taxon>
        <taxon>Alphaproteobacteria</taxon>
        <taxon>Hyphomicrobiales</taxon>
        <taxon>Rhizobiaceae</taxon>
        <taxon>Rhizobium/Agrobacterium group</taxon>
        <taxon>Rhizobium</taxon>
    </lineage>
</organism>
<proteinExistence type="inferred from homology"/>
<feature type="chain" id="PRO_1000132119" description="Protein nucleotidyltransferase YdiU">
    <location>
        <begin position="1"/>
        <end position="500"/>
    </location>
</feature>
<feature type="active site" description="Proton acceptor" evidence="1">
    <location>
        <position position="258"/>
    </location>
</feature>
<feature type="binding site" evidence="1">
    <location>
        <position position="96"/>
    </location>
    <ligand>
        <name>ATP</name>
        <dbReference type="ChEBI" id="CHEBI:30616"/>
    </ligand>
</feature>
<feature type="binding site" evidence="1">
    <location>
        <position position="98"/>
    </location>
    <ligand>
        <name>ATP</name>
        <dbReference type="ChEBI" id="CHEBI:30616"/>
    </ligand>
</feature>
<feature type="binding site" evidence="1">
    <location>
        <position position="99"/>
    </location>
    <ligand>
        <name>ATP</name>
        <dbReference type="ChEBI" id="CHEBI:30616"/>
    </ligand>
</feature>
<feature type="binding site" evidence="1">
    <location>
        <position position="119"/>
    </location>
    <ligand>
        <name>ATP</name>
        <dbReference type="ChEBI" id="CHEBI:30616"/>
    </ligand>
</feature>
<feature type="binding site" evidence="1">
    <location>
        <position position="131"/>
    </location>
    <ligand>
        <name>ATP</name>
        <dbReference type="ChEBI" id="CHEBI:30616"/>
    </ligand>
</feature>
<feature type="binding site" evidence="1">
    <location>
        <position position="132"/>
    </location>
    <ligand>
        <name>ATP</name>
        <dbReference type="ChEBI" id="CHEBI:30616"/>
    </ligand>
</feature>
<feature type="binding site" evidence="1">
    <location>
        <position position="182"/>
    </location>
    <ligand>
        <name>ATP</name>
        <dbReference type="ChEBI" id="CHEBI:30616"/>
    </ligand>
</feature>
<feature type="binding site" evidence="1">
    <location>
        <position position="189"/>
    </location>
    <ligand>
        <name>ATP</name>
        <dbReference type="ChEBI" id="CHEBI:30616"/>
    </ligand>
</feature>
<feature type="binding site" evidence="1">
    <location>
        <position position="259"/>
    </location>
    <ligand>
        <name>Mg(2+)</name>
        <dbReference type="ChEBI" id="CHEBI:18420"/>
    </ligand>
</feature>
<feature type="binding site" evidence="1">
    <location>
        <position position="268"/>
    </location>
    <ligand>
        <name>ATP</name>
        <dbReference type="ChEBI" id="CHEBI:30616"/>
    </ligand>
</feature>
<feature type="binding site" evidence="1">
    <location>
        <position position="268"/>
    </location>
    <ligand>
        <name>Mg(2+)</name>
        <dbReference type="ChEBI" id="CHEBI:18420"/>
    </ligand>
</feature>
<comment type="function">
    <text evidence="1">Nucleotidyltransferase involved in the post-translational modification of proteins. It can catalyze the addition of adenosine monophosphate (AMP) or uridine monophosphate (UMP) to a protein, resulting in modifications known as AMPylation and UMPylation.</text>
</comment>
<comment type="catalytic activity">
    <reaction evidence="1">
        <text>L-seryl-[protein] + ATP = 3-O-(5'-adenylyl)-L-seryl-[protein] + diphosphate</text>
        <dbReference type="Rhea" id="RHEA:58120"/>
        <dbReference type="Rhea" id="RHEA-COMP:9863"/>
        <dbReference type="Rhea" id="RHEA-COMP:15073"/>
        <dbReference type="ChEBI" id="CHEBI:29999"/>
        <dbReference type="ChEBI" id="CHEBI:30616"/>
        <dbReference type="ChEBI" id="CHEBI:33019"/>
        <dbReference type="ChEBI" id="CHEBI:142516"/>
        <dbReference type="EC" id="2.7.7.108"/>
    </reaction>
</comment>
<comment type="catalytic activity">
    <reaction evidence="1">
        <text>L-threonyl-[protein] + ATP = 3-O-(5'-adenylyl)-L-threonyl-[protein] + diphosphate</text>
        <dbReference type="Rhea" id="RHEA:54292"/>
        <dbReference type="Rhea" id="RHEA-COMP:11060"/>
        <dbReference type="Rhea" id="RHEA-COMP:13847"/>
        <dbReference type="ChEBI" id="CHEBI:30013"/>
        <dbReference type="ChEBI" id="CHEBI:30616"/>
        <dbReference type="ChEBI" id="CHEBI:33019"/>
        <dbReference type="ChEBI" id="CHEBI:138113"/>
        <dbReference type="EC" id="2.7.7.108"/>
    </reaction>
</comment>
<comment type="catalytic activity">
    <reaction evidence="1">
        <text>L-tyrosyl-[protein] + ATP = O-(5'-adenylyl)-L-tyrosyl-[protein] + diphosphate</text>
        <dbReference type="Rhea" id="RHEA:54288"/>
        <dbReference type="Rhea" id="RHEA-COMP:10136"/>
        <dbReference type="Rhea" id="RHEA-COMP:13846"/>
        <dbReference type="ChEBI" id="CHEBI:30616"/>
        <dbReference type="ChEBI" id="CHEBI:33019"/>
        <dbReference type="ChEBI" id="CHEBI:46858"/>
        <dbReference type="ChEBI" id="CHEBI:83624"/>
        <dbReference type="EC" id="2.7.7.108"/>
    </reaction>
</comment>
<comment type="catalytic activity">
    <reaction evidence="1">
        <text>L-histidyl-[protein] + UTP = N(tele)-(5'-uridylyl)-L-histidyl-[protein] + diphosphate</text>
        <dbReference type="Rhea" id="RHEA:83891"/>
        <dbReference type="Rhea" id="RHEA-COMP:9745"/>
        <dbReference type="Rhea" id="RHEA-COMP:20239"/>
        <dbReference type="ChEBI" id="CHEBI:29979"/>
        <dbReference type="ChEBI" id="CHEBI:33019"/>
        <dbReference type="ChEBI" id="CHEBI:46398"/>
        <dbReference type="ChEBI" id="CHEBI:233474"/>
    </reaction>
</comment>
<comment type="catalytic activity">
    <reaction evidence="1">
        <text>L-seryl-[protein] + UTP = O-(5'-uridylyl)-L-seryl-[protein] + diphosphate</text>
        <dbReference type="Rhea" id="RHEA:64604"/>
        <dbReference type="Rhea" id="RHEA-COMP:9863"/>
        <dbReference type="Rhea" id="RHEA-COMP:16635"/>
        <dbReference type="ChEBI" id="CHEBI:29999"/>
        <dbReference type="ChEBI" id="CHEBI:33019"/>
        <dbReference type="ChEBI" id="CHEBI:46398"/>
        <dbReference type="ChEBI" id="CHEBI:156051"/>
    </reaction>
</comment>
<comment type="catalytic activity">
    <reaction evidence="1">
        <text>L-tyrosyl-[protein] + UTP = O-(5'-uridylyl)-L-tyrosyl-[protein] + diphosphate</text>
        <dbReference type="Rhea" id="RHEA:83887"/>
        <dbReference type="Rhea" id="RHEA-COMP:10136"/>
        <dbReference type="Rhea" id="RHEA-COMP:20238"/>
        <dbReference type="ChEBI" id="CHEBI:33019"/>
        <dbReference type="ChEBI" id="CHEBI:46398"/>
        <dbReference type="ChEBI" id="CHEBI:46858"/>
        <dbReference type="ChEBI" id="CHEBI:90602"/>
    </reaction>
</comment>
<comment type="cofactor">
    <cofactor evidence="1">
        <name>Mg(2+)</name>
        <dbReference type="ChEBI" id="CHEBI:18420"/>
    </cofactor>
    <cofactor evidence="1">
        <name>Mn(2+)</name>
        <dbReference type="ChEBI" id="CHEBI:29035"/>
    </cofactor>
</comment>
<comment type="similarity">
    <text evidence="1">Belongs to the SELO family.</text>
</comment>
<evidence type="ECO:0000255" key="1">
    <source>
        <dbReference type="HAMAP-Rule" id="MF_00692"/>
    </source>
</evidence>
<gene>
    <name evidence="1" type="primary">ydiU</name>
    <name evidence="1" type="synonym">selO</name>
    <name type="ordered locus">RHECIAT_CH0001310</name>
</gene>